<comment type="function">
    <text evidence="1">Catalyzes the first step in hexosamine metabolism, converting fructose-6P into glucosamine-6P using glutamine as a nitrogen source.</text>
</comment>
<comment type="catalytic activity">
    <reaction evidence="1">
        <text>D-fructose 6-phosphate + L-glutamine = D-glucosamine 6-phosphate + L-glutamate</text>
        <dbReference type="Rhea" id="RHEA:13237"/>
        <dbReference type="ChEBI" id="CHEBI:29985"/>
        <dbReference type="ChEBI" id="CHEBI:58359"/>
        <dbReference type="ChEBI" id="CHEBI:58725"/>
        <dbReference type="ChEBI" id="CHEBI:61527"/>
        <dbReference type="EC" id="2.6.1.16"/>
    </reaction>
</comment>
<comment type="subunit">
    <text evidence="1">Homodimer.</text>
</comment>
<comment type="subcellular location">
    <subcellularLocation>
        <location evidence="1">Cytoplasm</location>
    </subcellularLocation>
</comment>
<sequence>MCGIVGAVAQRDIAEILIEGLRRLEYRGYDSAGLAVVDNEKNMFRLREVGKVQVLADEVDKQPVLGGTGIAHTRWATHGEPNEKNAHPHVSDYIAVVHNGIIENYEELRVQLIALGYQFISDTDTEVIAHLVHWEQKQGGTLLEAIQRVIPRLRGAYGAVIMDSRDPGTIIAARSGSPLVIGLGVGENFLASDQLALLPVTRRFIFLEEGDIAEVTRRTVRIFNTQGKPVEREQIESNIQYDAGDKGIYRHYMQKEIYEQPMAIKSTLERRLSHGQVDLSELGPNAAKLLAKVEHIQIVACGTSYNAGMVSRYWFEALAGIPCDVEIASEFRYRKSARRSGSLLITLSQSGETADTLAALRLSKELGYLTSLTVCNVAGSSLVRESDFALMTKAGAEIGVASTKAFTTQLTVLLMLVAYLGRLKGVDAEQEQEIVHALHALPSRIEGMLSKDKIIEVLAEDFSDKHHALFLGRGDQYPIAVEGALKLKEISYIHAEAYAAGELKHGPLALIDADMPVIIVAPNNELLEKLKSNIEEVRARGGLLYVFADQDAGFTDSEGMKIIPLPHVEELIAPIFYTVPLQLLSYHVALIKGTDVDQPRNLAKSVTVE</sequence>
<gene>
    <name evidence="1" type="primary">glmS</name>
    <name type="ordered locus">plu0037</name>
</gene>
<proteinExistence type="inferred from homology"/>
<keyword id="KW-0032">Aminotransferase</keyword>
<keyword id="KW-0963">Cytoplasm</keyword>
<keyword id="KW-0315">Glutamine amidotransferase</keyword>
<keyword id="KW-1185">Reference proteome</keyword>
<keyword id="KW-0677">Repeat</keyword>
<keyword id="KW-0808">Transferase</keyword>
<accession>Q7NA97</accession>
<feature type="initiator methionine" description="Removed" evidence="1">
    <location>
        <position position="1"/>
    </location>
</feature>
<feature type="chain" id="PRO_0000135365" description="Glutamine--fructose-6-phosphate aminotransferase [isomerizing]">
    <location>
        <begin position="2"/>
        <end position="609"/>
    </location>
</feature>
<feature type="domain" description="Glutamine amidotransferase type-2" evidence="1">
    <location>
        <begin position="2"/>
        <end position="218"/>
    </location>
</feature>
<feature type="domain" description="SIS 1" evidence="1">
    <location>
        <begin position="286"/>
        <end position="426"/>
    </location>
</feature>
<feature type="domain" description="SIS 2" evidence="1">
    <location>
        <begin position="458"/>
        <end position="599"/>
    </location>
</feature>
<feature type="active site" description="Nucleophile; for GATase activity" evidence="1">
    <location>
        <position position="2"/>
    </location>
</feature>
<feature type="active site" description="For Fru-6P isomerization activity" evidence="1">
    <location>
        <position position="604"/>
    </location>
</feature>
<reference key="1">
    <citation type="journal article" date="2003" name="Nat. Biotechnol.">
        <title>The genome sequence of the entomopathogenic bacterium Photorhabdus luminescens.</title>
        <authorList>
            <person name="Duchaud E."/>
            <person name="Rusniok C."/>
            <person name="Frangeul L."/>
            <person name="Buchrieser C."/>
            <person name="Givaudan A."/>
            <person name="Taourit S."/>
            <person name="Bocs S."/>
            <person name="Boursaux-Eude C."/>
            <person name="Chandler M."/>
            <person name="Charles J.-F."/>
            <person name="Dassa E."/>
            <person name="Derose R."/>
            <person name="Derzelle S."/>
            <person name="Freyssinet G."/>
            <person name="Gaudriault S."/>
            <person name="Medigue C."/>
            <person name="Lanois A."/>
            <person name="Powell K."/>
            <person name="Siguier P."/>
            <person name="Vincent R."/>
            <person name="Wingate V."/>
            <person name="Zouine M."/>
            <person name="Glaser P."/>
            <person name="Boemare N."/>
            <person name="Danchin A."/>
            <person name="Kunst F."/>
        </authorList>
    </citation>
    <scope>NUCLEOTIDE SEQUENCE [LARGE SCALE GENOMIC DNA]</scope>
    <source>
        <strain>DSM 15139 / CIP 105565 / TT01</strain>
    </source>
</reference>
<protein>
    <recommendedName>
        <fullName evidence="1">Glutamine--fructose-6-phosphate aminotransferase [isomerizing]</fullName>
        <ecNumber evidence="1">2.6.1.16</ecNumber>
    </recommendedName>
    <alternativeName>
        <fullName evidence="1">D-fructose-6-phosphate amidotransferase</fullName>
    </alternativeName>
    <alternativeName>
        <fullName evidence="1">GFAT</fullName>
    </alternativeName>
    <alternativeName>
        <fullName evidence="1">Glucosamine-6-phosphate synthase</fullName>
    </alternativeName>
    <alternativeName>
        <fullName evidence="1">Hexosephosphate aminotransferase</fullName>
    </alternativeName>
    <alternativeName>
        <fullName evidence="1">L-glutamine--D-fructose-6-phosphate amidotransferase</fullName>
    </alternativeName>
</protein>
<evidence type="ECO:0000255" key="1">
    <source>
        <dbReference type="HAMAP-Rule" id="MF_00164"/>
    </source>
</evidence>
<name>GLMS_PHOLL</name>
<organism>
    <name type="scientific">Photorhabdus laumondii subsp. laumondii (strain DSM 15139 / CIP 105565 / TT01)</name>
    <name type="common">Photorhabdus luminescens subsp. laumondii</name>
    <dbReference type="NCBI Taxonomy" id="243265"/>
    <lineage>
        <taxon>Bacteria</taxon>
        <taxon>Pseudomonadati</taxon>
        <taxon>Pseudomonadota</taxon>
        <taxon>Gammaproteobacteria</taxon>
        <taxon>Enterobacterales</taxon>
        <taxon>Morganellaceae</taxon>
        <taxon>Photorhabdus</taxon>
    </lineage>
</organism>
<dbReference type="EC" id="2.6.1.16" evidence="1"/>
<dbReference type="EMBL" id="BX571859">
    <property type="protein sequence ID" value="CAE12332.1"/>
    <property type="molecule type" value="Genomic_DNA"/>
</dbReference>
<dbReference type="RefSeq" id="WP_011144450.1">
    <property type="nucleotide sequence ID" value="NC_005126.1"/>
</dbReference>
<dbReference type="SMR" id="Q7NA97"/>
<dbReference type="STRING" id="243265.plu0037"/>
<dbReference type="GeneID" id="48846337"/>
<dbReference type="KEGG" id="plu:plu0037"/>
<dbReference type="eggNOG" id="COG0449">
    <property type="taxonomic scope" value="Bacteria"/>
</dbReference>
<dbReference type="HOGENOM" id="CLU_012520_5_2_6"/>
<dbReference type="OrthoDB" id="9761808at2"/>
<dbReference type="Proteomes" id="UP000002514">
    <property type="component" value="Chromosome"/>
</dbReference>
<dbReference type="GO" id="GO:0005829">
    <property type="term" value="C:cytosol"/>
    <property type="evidence" value="ECO:0007669"/>
    <property type="project" value="TreeGrafter"/>
</dbReference>
<dbReference type="GO" id="GO:0097367">
    <property type="term" value="F:carbohydrate derivative binding"/>
    <property type="evidence" value="ECO:0007669"/>
    <property type="project" value="InterPro"/>
</dbReference>
<dbReference type="GO" id="GO:0004360">
    <property type="term" value="F:glutamine-fructose-6-phosphate transaminase (isomerizing) activity"/>
    <property type="evidence" value="ECO:0007669"/>
    <property type="project" value="UniProtKB-UniRule"/>
</dbReference>
<dbReference type="GO" id="GO:0005975">
    <property type="term" value="P:carbohydrate metabolic process"/>
    <property type="evidence" value="ECO:0007669"/>
    <property type="project" value="UniProtKB-UniRule"/>
</dbReference>
<dbReference type="GO" id="GO:0006002">
    <property type="term" value="P:fructose 6-phosphate metabolic process"/>
    <property type="evidence" value="ECO:0007669"/>
    <property type="project" value="TreeGrafter"/>
</dbReference>
<dbReference type="GO" id="GO:0006487">
    <property type="term" value="P:protein N-linked glycosylation"/>
    <property type="evidence" value="ECO:0007669"/>
    <property type="project" value="TreeGrafter"/>
</dbReference>
<dbReference type="GO" id="GO:0006047">
    <property type="term" value="P:UDP-N-acetylglucosamine metabolic process"/>
    <property type="evidence" value="ECO:0007669"/>
    <property type="project" value="TreeGrafter"/>
</dbReference>
<dbReference type="CDD" id="cd00714">
    <property type="entry name" value="GFAT"/>
    <property type="match status" value="1"/>
</dbReference>
<dbReference type="CDD" id="cd05008">
    <property type="entry name" value="SIS_GlmS_GlmD_1"/>
    <property type="match status" value="1"/>
</dbReference>
<dbReference type="CDD" id="cd05009">
    <property type="entry name" value="SIS_GlmS_GlmD_2"/>
    <property type="match status" value="1"/>
</dbReference>
<dbReference type="FunFam" id="3.40.50.10490:FF:000001">
    <property type="entry name" value="Glutamine--fructose-6-phosphate aminotransferase [isomerizing]"/>
    <property type="match status" value="1"/>
</dbReference>
<dbReference type="FunFam" id="3.40.50.10490:FF:000002">
    <property type="entry name" value="Glutamine--fructose-6-phosphate aminotransferase [isomerizing]"/>
    <property type="match status" value="1"/>
</dbReference>
<dbReference type="FunFam" id="3.60.20.10:FF:000006">
    <property type="entry name" value="Glutamine--fructose-6-phosphate aminotransferase [isomerizing]"/>
    <property type="match status" value="1"/>
</dbReference>
<dbReference type="Gene3D" id="3.40.50.10490">
    <property type="entry name" value="Glucose-6-phosphate isomerase like protein, domain 1"/>
    <property type="match status" value="2"/>
</dbReference>
<dbReference type="Gene3D" id="3.60.20.10">
    <property type="entry name" value="Glutamine Phosphoribosylpyrophosphate, subunit 1, domain 1"/>
    <property type="match status" value="1"/>
</dbReference>
<dbReference type="HAMAP" id="MF_00164">
    <property type="entry name" value="GlmS"/>
    <property type="match status" value="1"/>
</dbReference>
<dbReference type="InterPro" id="IPR017932">
    <property type="entry name" value="GATase_2_dom"/>
</dbReference>
<dbReference type="InterPro" id="IPR005855">
    <property type="entry name" value="GFAT"/>
</dbReference>
<dbReference type="InterPro" id="IPR047084">
    <property type="entry name" value="GFAT_N"/>
</dbReference>
<dbReference type="InterPro" id="IPR035466">
    <property type="entry name" value="GlmS/AgaS_SIS"/>
</dbReference>
<dbReference type="InterPro" id="IPR035490">
    <property type="entry name" value="GlmS/FrlB_SIS"/>
</dbReference>
<dbReference type="InterPro" id="IPR029055">
    <property type="entry name" value="Ntn_hydrolases_N"/>
</dbReference>
<dbReference type="InterPro" id="IPR001347">
    <property type="entry name" value="SIS_dom"/>
</dbReference>
<dbReference type="InterPro" id="IPR046348">
    <property type="entry name" value="SIS_dom_sf"/>
</dbReference>
<dbReference type="NCBIfam" id="TIGR01135">
    <property type="entry name" value="glmS"/>
    <property type="match status" value="1"/>
</dbReference>
<dbReference type="NCBIfam" id="NF001484">
    <property type="entry name" value="PRK00331.1"/>
    <property type="match status" value="1"/>
</dbReference>
<dbReference type="PANTHER" id="PTHR10937">
    <property type="entry name" value="GLUCOSAMINE--FRUCTOSE-6-PHOSPHATE AMINOTRANSFERASE, ISOMERIZING"/>
    <property type="match status" value="1"/>
</dbReference>
<dbReference type="PANTHER" id="PTHR10937:SF0">
    <property type="entry name" value="GLUTAMINE--FRUCTOSE-6-PHOSPHATE TRANSAMINASE (ISOMERIZING)"/>
    <property type="match status" value="1"/>
</dbReference>
<dbReference type="Pfam" id="PF13522">
    <property type="entry name" value="GATase_6"/>
    <property type="match status" value="1"/>
</dbReference>
<dbReference type="Pfam" id="PF01380">
    <property type="entry name" value="SIS"/>
    <property type="match status" value="2"/>
</dbReference>
<dbReference type="SUPFAM" id="SSF56235">
    <property type="entry name" value="N-terminal nucleophile aminohydrolases (Ntn hydrolases)"/>
    <property type="match status" value="1"/>
</dbReference>
<dbReference type="SUPFAM" id="SSF53697">
    <property type="entry name" value="SIS domain"/>
    <property type="match status" value="1"/>
</dbReference>
<dbReference type="PROSITE" id="PS51278">
    <property type="entry name" value="GATASE_TYPE_2"/>
    <property type="match status" value="1"/>
</dbReference>
<dbReference type="PROSITE" id="PS51464">
    <property type="entry name" value="SIS"/>
    <property type="match status" value="2"/>
</dbReference>